<gene>
    <name type="primary">Defb12</name>
</gene>
<comment type="function">
    <text evidence="1">Has antibacterial activity.</text>
</comment>
<comment type="subcellular location">
    <subcellularLocation>
        <location evidence="1">Secreted</location>
    </subcellularLocation>
</comment>
<comment type="tissue specificity">
    <text evidence="3">Only expressed in epididymis (caput, corpus and cauda).</text>
</comment>
<comment type="similarity">
    <text evidence="4">Belongs to the beta-defensin family.</text>
</comment>
<comment type="sequence caution" evidence="4">
    <conflict type="erroneous initiation">
        <sequence resource="EMBL-CDS" id="BAC10632"/>
    </conflict>
</comment>
<comment type="sequence caution" evidence="4">
    <conflict type="erroneous initiation">
        <sequence resource="EMBL-CDS" id="BAC25621"/>
    </conflict>
</comment>
<protein>
    <recommendedName>
        <fullName>Beta-defensin 12</fullName>
        <shortName>BD-12</shortName>
        <shortName>mBD-12</shortName>
    </recommendedName>
    <alternativeName>
        <fullName>Defensin, beta 12</fullName>
    </alternativeName>
</protein>
<name>DFB12_MOUSE</name>
<reference key="1">
    <citation type="journal article" date="2002" name="J. Immunol.">
        <title>Identification of multiple novel epididymis-specific beta-defensin isoforms in humans and mice.</title>
        <authorList>
            <person name="Yamaguchi Y."/>
            <person name="Nagase T."/>
            <person name="Makita R."/>
            <person name="Fukuhara S."/>
            <person name="Tomita T."/>
            <person name="Tominaga T."/>
            <person name="Kurihara H."/>
            <person name="Ouchi Y."/>
        </authorList>
    </citation>
    <scope>NUCLEOTIDE SEQUENCE [MRNA]</scope>
    <source>
        <tissue>Epididymis</tissue>
    </source>
</reference>
<reference key="2">
    <citation type="journal article" date="2005" name="Science">
        <title>The transcriptional landscape of the mammalian genome.</title>
        <authorList>
            <person name="Carninci P."/>
            <person name="Kasukawa T."/>
            <person name="Katayama S."/>
            <person name="Gough J."/>
            <person name="Frith M.C."/>
            <person name="Maeda N."/>
            <person name="Oyama R."/>
            <person name="Ravasi T."/>
            <person name="Lenhard B."/>
            <person name="Wells C."/>
            <person name="Kodzius R."/>
            <person name="Shimokawa K."/>
            <person name="Bajic V.B."/>
            <person name="Brenner S.E."/>
            <person name="Batalov S."/>
            <person name="Forrest A.R."/>
            <person name="Zavolan M."/>
            <person name="Davis M.J."/>
            <person name="Wilming L.G."/>
            <person name="Aidinis V."/>
            <person name="Allen J.E."/>
            <person name="Ambesi-Impiombato A."/>
            <person name="Apweiler R."/>
            <person name="Aturaliya R.N."/>
            <person name="Bailey T.L."/>
            <person name="Bansal M."/>
            <person name="Baxter L."/>
            <person name="Beisel K.W."/>
            <person name="Bersano T."/>
            <person name="Bono H."/>
            <person name="Chalk A.M."/>
            <person name="Chiu K.P."/>
            <person name="Choudhary V."/>
            <person name="Christoffels A."/>
            <person name="Clutterbuck D.R."/>
            <person name="Crowe M.L."/>
            <person name="Dalla E."/>
            <person name="Dalrymple B.P."/>
            <person name="de Bono B."/>
            <person name="Della Gatta G."/>
            <person name="di Bernardo D."/>
            <person name="Down T."/>
            <person name="Engstrom P."/>
            <person name="Fagiolini M."/>
            <person name="Faulkner G."/>
            <person name="Fletcher C.F."/>
            <person name="Fukushima T."/>
            <person name="Furuno M."/>
            <person name="Futaki S."/>
            <person name="Gariboldi M."/>
            <person name="Georgii-Hemming P."/>
            <person name="Gingeras T.R."/>
            <person name="Gojobori T."/>
            <person name="Green R.E."/>
            <person name="Gustincich S."/>
            <person name="Harbers M."/>
            <person name="Hayashi Y."/>
            <person name="Hensch T.K."/>
            <person name="Hirokawa N."/>
            <person name="Hill D."/>
            <person name="Huminiecki L."/>
            <person name="Iacono M."/>
            <person name="Ikeo K."/>
            <person name="Iwama A."/>
            <person name="Ishikawa T."/>
            <person name="Jakt M."/>
            <person name="Kanapin A."/>
            <person name="Katoh M."/>
            <person name="Kawasawa Y."/>
            <person name="Kelso J."/>
            <person name="Kitamura H."/>
            <person name="Kitano H."/>
            <person name="Kollias G."/>
            <person name="Krishnan S.P."/>
            <person name="Kruger A."/>
            <person name="Kummerfeld S.K."/>
            <person name="Kurochkin I.V."/>
            <person name="Lareau L.F."/>
            <person name="Lazarevic D."/>
            <person name="Lipovich L."/>
            <person name="Liu J."/>
            <person name="Liuni S."/>
            <person name="McWilliam S."/>
            <person name="Madan Babu M."/>
            <person name="Madera M."/>
            <person name="Marchionni L."/>
            <person name="Matsuda H."/>
            <person name="Matsuzawa S."/>
            <person name="Miki H."/>
            <person name="Mignone F."/>
            <person name="Miyake S."/>
            <person name="Morris K."/>
            <person name="Mottagui-Tabar S."/>
            <person name="Mulder N."/>
            <person name="Nakano N."/>
            <person name="Nakauchi H."/>
            <person name="Ng P."/>
            <person name="Nilsson R."/>
            <person name="Nishiguchi S."/>
            <person name="Nishikawa S."/>
            <person name="Nori F."/>
            <person name="Ohara O."/>
            <person name="Okazaki Y."/>
            <person name="Orlando V."/>
            <person name="Pang K.C."/>
            <person name="Pavan W.J."/>
            <person name="Pavesi G."/>
            <person name="Pesole G."/>
            <person name="Petrovsky N."/>
            <person name="Piazza S."/>
            <person name="Reed J."/>
            <person name="Reid J.F."/>
            <person name="Ring B.Z."/>
            <person name="Ringwald M."/>
            <person name="Rost B."/>
            <person name="Ruan Y."/>
            <person name="Salzberg S.L."/>
            <person name="Sandelin A."/>
            <person name="Schneider C."/>
            <person name="Schoenbach C."/>
            <person name="Sekiguchi K."/>
            <person name="Semple C.A."/>
            <person name="Seno S."/>
            <person name="Sessa L."/>
            <person name="Sheng Y."/>
            <person name="Shibata Y."/>
            <person name="Shimada H."/>
            <person name="Shimada K."/>
            <person name="Silva D."/>
            <person name="Sinclair B."/>
            <person name="Sperling S."/>
            <person name="Stupka E."/>
            <person name="Sugiura K."/>
            <person name="Sultana R."/>
            <person name="Takenaka Y."/>
            <person name="Taki K."/>
            <person name="Tammoja K."/>
            <person name="Tan S.L."/>
            <person name="Tang S."/>
            <person name="Taylor M.S."/>
            <person name="Tegner J."/>
            <person name="Teichmann S.A."/>
            <person name="Ueda H.R."/>
            <person name="van Nimwegen E."/>
            <person name="Verardo R."/>
            <person name="Wei C.L."/>
            <person name="Yagi K."/>
            <person name="Yamanishi H."/>
            <person name="Zabarovsky E."/>
            <person name="Zhu S."/>
            <person name="Zimmer A."/>
            <person name="Hide W."/>
            <person name="Bult C."/>
            <person name="Grimmond S.M."/>
            <person name="Teasdale R.D."/>
            <person name="Liu E.T."/>
            <person name="Brusic V."/>
            <person name="Quackenbush J."/>
            <person name="Wahlestedt C."/>
            <person name="Mattick J.S."/>
            <person name="Hume D.A."/>
            <person name="Kai C."/>
            <person name="Sasaki D."/>
            <person name="Tomaru Y."/>
            <person name="Fukuda S."/>
            <person name="Kanamori-Katayama M."/>
            <person name="Suzuki M."/>
            <person name="Aoki J."/>
            <person name="Arakawa T."/>
            <person name="Iida J."/>
            <person name="Imamura K."/>
            <person name="Itoh M."/>
            <person name="Kato T."/>
            <person name="Kawaji H."/>
            <person name="Kawagashira N."/>
            <person name="Kawashima T."/>
            <person name="Kojima M."/>
            <person name="Kondo S."/>
            <person name="Konno H."/>
            <person name="Nakano K."/>
            <person name="Ninomiya N."/>
            <person name="Nishio T."/>
            <person name="Okada M."/>
            <person name="Plessy C."/>
            <person name="Shibata K."/>
            <person name="Shiraki T."/>
            <person name="Suzuki S."/>
            <person name="Tagami M."/>
            <person name="Waki K."/>
            <person name="Watahiki A."/>
            <person name="Okamura-Oho Y."/>
            <person name="Suzuki H."/>
            <person name="Kawai J."/>
            <person name="Hayashizaki Y."/>
        </authorList>
    </citation>
    <scope>NUCLEOTIDE SEQUENCE [LARGE SCALE MRNA]</scope>
    <source>
        <strain>C57BL/6J</strain>
        <tissue>Epididymis</tissue>
    </source>
</reference>
<reference key="3">
    <citation type="journal article" date="2004" name="J. Biol. Chem.">
        <title>Identification on mouse chromosome 8 of new beta-defensin genes with regionally specific expression in the male reproductive organ.</title>
        <authorList>
            <person name="Zaballos A."/>
            <person name="Villares R."/>
            <person name="Albar J.P."/>
            <person name="Martinez-A C."/>
            <person name="Marquez G."/>
        </authorList>
    </citation>
    <scope>TISSUE SPECIFICITY</scope>
    <source>
        <strain>BALB/cJ</strain>
        <tissue>Epididymis</tissue>
    </source>
</reference>
<sequence>MALSREVFYFGFALFFIVVELPSGSWAGLEYSQSFPGGEIAVCETCRLGRGKCRRTCIESEKIAGWCKLNFFCCRERI</sequence>
<evidence type="ECO:0000250" key="1"/>
<evidence type="ECO:0000255" key="2"/>
<evidence type="ECO:0000269" key="3">
    <source>
    </source>
</evidence>
<evidence type="ECO:0000305" key="4"/>
<accession>Q8K4N3</accession>
<organism>
    <name type="scientific">Mus musculus</name>
    <name type="common">Mouse</name>
    <dbReference type="NCBI Taxonomy" id="10090"/>
    <lineage>
        <taxon>Eukaryota</taxon>
        <taxon>Metazoa</taxon>
        <taxon>Chordata</taxon>
        <taxon>Craniata</taxon>
        <taxon>Vertebrata</taxon>
        <taxon>Euteleostomi</taxon>
        <taxon>Mammalia</taxon>
        <taxon>Eutheria</taxon>
        <taxon>Euarchontoglires</taxon>
        <taxon>Glires</taxon>
        <taxon>Rodentia</taxon>
        <taxon>Myomorpha</taxon>
        <taxon>Muroidea</taxon>
        <taxon>Muridae</taxon>
        <taxon>Murinae</taxon>
        <taxon>Mus</taxon>
        <taxon>Mus</taxon>
    </lineage>
</organism>
<feature type="signal peptide" evidence="2">
    <location>
        <begin position="1"/>
        <end position="27"/>
    </location>
</feature>
<feature type="chain" id="PRO_0000006940" description="Beta-defensin 12">
    <location>
        <begin position="28"/>
        <end position="78"/>
    </location>
</feature>
<feature type="disulfide bond" evidence="1">
    <location>
        <begin position="46"/>
        <end position="73"/>
    </location>
</feature>
<feature type="disulfide bond" evidence="1">
    <location>
        <begin position="53"/>
        <end position="67"/>
    </location>
</feature>
<feature type="disulfide bond" evidence="1">
    <location>
        <begin position="57"/>
        <end position="74"/>
    </location>
</feature>
<proteinExistence type="evidence at transcript level"/>
<keyword id="KW-0044">Antibiotic</keyword>
<keyword id="KW-0929">Antimicrobial</keyword>
<keyword id="KW-0211">Defensin</keyword>
<keyword id="KW-1015">Disulfide bond</keyword>
<keyword id="KW-1185">Reference proteome</keyword>
<keyword id="KW-0964">Secreted</keyword>
<keyword id="KW-0732">Signal</keyword>
<dbReference type="EMBL" id="AB089182">
    <property type="protein sequence ID" value="BAC10632.1"/>
    <property type="status" value="ALT_INIT"/>
    <property type="molecule type" value="mRNA"/>
</dbReference>
<dbReference type="EMBL" id="AK020311">
    <property type="protein sequence ID" value="BAC25621.1"/>
    <property type="status" value="ALT_INIT"/>
    <property type="molecule type" value="mRNA"/>
</dbReference>
<dbReference type="CCDS" id="CCDS52496.1"/>
<dbReference type="RefSeq" id="NP_690015.2">
    <property type="nucleotide sequence ID" value="NM_152802.4"/>
</dbReference>
<dbReference type="SMR" id="Q8K4N3"/>
<dbReference type="STRING" id="10090.ENSMUSP00000060899"/>
<dbReference type="PaxDb" id="10090-ENSMUSP00000060899"/>
<dbReference type="DNASU" id="77674"/>
<dbReference type="Ensembl" id="ENSMUST00000062113.9">
    <property type="protein sequence ID" value="ENSMUSP00000060899.9"/>
    <property type="gene ID" value="ENSMUSG00000043787.9"/>
</dbReference>
<dbReference type="GeneID" id="77674"/>
<dbReference type="KEGG" id="mmu:77674"/>
<dbReference type="UCSC" id="uc009lac.1">
    <property type="organism name" value="mouse"/>
</dbReference>
<dbReference type="AGR" id="MGI:1924924"/>
<dbReference type="CTD" id="77674"/>
<dbReference type="MGI" id="MGI:1924924">
    <property type="gene designation" value="Defb12"/>
</dbReference>
<dbReference type="eggNOG" id="ENOG502TE24">
    <property type="taxonomic scope" value="Eukaryota"/>
</dbReference>
<dbReference type="GeneTree" id="ENSGT00390000002317"/>
<dbReference type="InParanoid" id="Q8K4N3"/>
<dbReference type="OrthoDB" id="9511204at2759"/>
<dbReference type="PhylomeDB" id="Q8K4N3"/>
<dbReference type="BioGRID-ORCS" id="77674">
    <property type="hits" value="0 hits in 74 CRISPR screens"/>
</dbReference>
<dbReference type="PRO" id="PR:Q8K4N3"/>
<dbReference type="Proteomes" id="UP000000589">
    <property type="component" value="Chromosome 8"/>
</dbReference>
<dbReference type="RNAct" id="Q8K4N3">
    <property type="molecule type" value="protein"/>
</dbReference>
<dbReference type="GO" id="GO:0005576">
    <property type="term" value="C:extracellular region"/>
    <property type="evidence" value="ECO:0007669"/>
    <property type="project" value="UniProtKB-SubCell"/>
</dbReference>
<dbReference type="GO" id="GO:0050829">
    <property type="term" value="P:defense response to Gram-negative bacterium"/>
    <property type="evidence" value="ECO:0000314"/>
    <property type="project" value="MGI"/>
</dbReference>
<dbReference type="GO" id="GO:0045087">
    <property type="term" value="P:innate immune response"/>
    <property type="evidence" value="ECO:0007669"/>
    <property type="project" value="InterPro"/>
</dbReference>
<dbReference type="InterPro" id="IPR025933">
    <property type="entry name" value="Beta_defensin_dom"/>
</dbReference>
<dbReference type="Pfam" id="PF13841">
    <property type="entry name" value="Defensin_beta_2"/>
    <property type="match status" value="1"/>
</dbReference>